<name>METN_LIGS1</name>
<organism>
    <name type="scientific">Ligilactobacillus salivarius (strain UCC118)</name>
    <name type="common">Lactobacillus salivarius</name>
    <dbReference type="NCBI Taxonomy" id="362948"/>
    <lineage>
        <taxon>Bacteria</taxon>
        <taxon>Bacillati</taxon>
        <taxon>Bacillota</taxon>
        <taxon>Bacilli</taxon>
        <taxon>Lactobacillales</taxon>
        <taxon>Lactobacillaceae</taxon>
        <taxon>Ligilactobacillus</taxon>
    </lineage>
</organism>
<evidence type="ECO:0000255" key="1">
    <source>
        <dbReference type="HAMAP-Rule" id="MF_01719"/>
    </source>
</evidence>
<reference key="1">
    <citation type="journal article" date="2006" name="Proc. Natl. Acad. Sci. U.S.A.">
        <title>Multireplicon genome architecture of Lactobacillus salivarius.</title>
        <authorList>
            <person name="Claesson M.J."/>
            <person name="Li Y."/>
            <person name="Leahy S."/>
            <person name="Canchaya C."/>
            <person name="van Pijkeren J.P."/>
            <person name="Cerdeno-Tarraga A.M."/>
            <person name="Parkhill J."/>
            <person name="Flynn S."/>
            <person name="O'Sullivan G.C."/>
            <person name="Collins J.K."/>
            <person name="Higgins D."/>
            <person name="Shanahan F."/>
            <person name="Fitzgerald G.F."/>
            <person name="van Sinderen D."/>
            <person name="O'Toole P.W."/>
        </authorList>
    </citation>
    <scope>NUCLEOTIDE SEQUENCE [LARGE SCALE GENOMIC DNA]</scope>
    <source>
        <strain>UCC118</strain>
    </source>
</reference>
<gene>
    <name evidence="1" type="primary">metN</name>
    <name type="ordered locus">LSL_0131</name>
</gene>
<proteinExistence type="inferred from homology"/>
<protein>
    <recommendedName>
        <fullName evidence="1">Methionine import ATP-binding protein MetN</fullName>
        <ecNumber evidence="1">7.4.2.11</ecNumber>
    </recommendedName>
</protein>
<sequence length="353" mass="39185">MTDIITLENIDVTFKQGKQIVNAVKNVNLNVEKGDIFGVVGYSGAGKSTLVRTINLLQKPTSGTVKVNGTLLFADNKQQISNKELQKQRRSIGMIFQHFNLLNETTVVDNVAFALRHSSLSDKEIEEKALNLLKLVGLEDKAKFYPIQLSGGEQQRVAIARALANDPEILISDESTSALDPRTTNQILDLLKELNAKLGLTIVLITHEMDAVKRIANKIAIMEHGVIIEKGKLRDVYLRPKEELSRQFVGGSLAAIETLKAFNLGNLSPDQKLFQLVFSAANVTKSIILELYKELGLDVSMLYGNIEVLESEPVGTMFILAKGEPDKLDKVADYLKKENVEVTRIDERGIWND</sequence>
<dbReference type="EC" id="7.4.2.11" evidence="1"/>
<dbReference type="EMBL" id="CP000233">
    <property type="protein sequence ID" value="ABD98948.1"/>
    <property type="molecule type" value="Genomic_DNA"/>
</dbReference>
<dbReference type="RefSeq" id="WP_011475540.1">
    <property type="nucleotide sequence ID" value="NC_007929.1"/>
</dbReference>
<dbReference type="RefSeq" id="YP_535031.1">
    <property type="nucleotide sequence ID" value="NC_007929.1"/>
</dbReference>
<dbReference type="SMR" id="Q1WVG9"/>
<dbReference type="STRING" id="362948.LSL_0131"/>
<dbReference type="KEGG" id="lsl:LSL_0131"/>
<dbReference type="PATRIC" id="fig|362948.14.peg.207"/>
<dbReference type="HOGENOM" id="CLU_000604_1_3_9"/>
<dbReference type="OrthoDB" id="9802264at2"/>
<dbReference type="Proteomes" id="UP000006559">
    <property type="component" value="Chromosome"/>
</dbReference>
<dbReference type="GO" id="GO:0005886">
    <property type="term" value="C:plasma membrane"/>
    <property type="evidence" value="ECO:0007669"/>
    <property type="project" value="UniProtKB-SubCell"/>
</dbReference>
<dbReference type="GO" id="GO:0033232">
    <property type="term" value="F:ABC-type D-methionine transporter activity"/>
    <property type="evidence" value="ECO:0007669"/>
    <property type="project" value="UniProtKB-EC"/>
</dbReference>
<dbReference type="GO" id="GO:0005524">
    <property type="term" value="F:ATP binding"/>
    <property type="evidence" value="ECO:0007669"/>
    <property type="project" value="UniProtKB-KW"/>
</dbReference>
<dbReference type="GO" id="GO:0016887">
    <property type="term" value="F:ATP hydrolysis activity"/>
    <property type="evidence" value="ECO:0007669"/>
    <property type="project" value="InterPro"/>
</dbReference>
<dbReference type="CDD" id="cd03258">
    <property type="entry name" value="ABC_MetN_methionine_transporter"/>
    <property type="match status" value="1"/>
</dbReference>
<dbReference type="FunFam" id="3.40.50.300:FF:000056">
    <property type="entry name" value="Cell division ATP-binding protein FtsE"/>
    <property type="match status" value="1"/>
</dbReference>
<dbReference type="Gene3D" id="3.30.70.260">
    <property type="match status" value="1"/>
</dbReference>
<dbReference type="Gene3D" id="3.40.50.300">
    <property type="entry name" value="P-loop containing nucleotide triphosphate hydrolases"/>
    <property type="match status" value="1"/>
</dbReference>
<dbReference type="InterPro" id="IPR003593">
    <property type="entry name" value="AAA+_ATPase"/>
</dbReference>
<dbReference type="InterPro" id="IPR003439">
    <property type="entry name" value="ABC_transporter-like_ATP-bd"/>
</dbReference>
<dbReference type="InterPro" id="IPR017871">
    <property type="entry name" value="ABC_transporter-like_CS"/>
</dbReference>
<dbReference type="InterPro" id="IPR045865">
    <property type="entry name" value="ACT-like_dom_sf"/>
</dbReference>
<dbReference type="InterPro" id="IPR041701">
    <property type="entry name" value="MetN_ABC"/>
</dbReference>
<dbReference type="InterPro" id="IPR050086">
    <property type="entry name" value="MetN_ABC_transporter-like"/>
</dbReference>
<dbReference type="InterPro" id="IPR018449">
    <property type="entry name" value="NIL_domain"/>
</dbReference>
<dbReference type="InterPro" id="IPR027417">
    <property type="entry name" value="P-loop_NTPase"/>
</dbReference>
<dbReference type="PANTHER" id="PTHR43166">
    <property type="entry name" value="AMINO ACID IMPORT ATP-BINDING PROTEIN"/>
    <property type="match status" value="1"/>
</dbReference>
<dbReference type="PANTHER" id="PTHR43166:SF30">
    <property type="entry name" value="METHIONINE IMPORT ATP-BINDING PROTEIN METN"/>
    <property type="match status" value="1"/>
</dbReference>
<dbReference type="Pfam" id="PF00005">
    <property type="entry name" value="ABC_tran"/>
    <property type="match status" value="1"/>
</dbReference>
<dbReference type="Pfam" id="PF09383">
    <property type="entry name" value="NIL"/>
    <property type="match status" value="1"/>
</dbReference>
<dbReference type="SMART" id="SM00382">
    <property type="entry name" value="AAA"/>
    <property type="match status" value="1"/>
</dbReference>
<dbReference type="SMART" id="SM00930">
    <property type="entry name" value="NIL"/>
    <property type="match status" value="1"/>
</dbReference>
<dbReference type="SUPFAM" id="SSF55021">
    <property type="entry name" value="ACT-like"/>
    <property type="match status" value="1"/>
</dbReference>
<dbReference type="SUPFAM" id="SSF52540">
    <property type="entry name" value="P-loop containing nucleoside triphosphate hydrolases"/>
    <property type="match status" value="1"/>
</dbReference>
<dbReference type="PROSITE" id="PS00211">
    <property type="entry name" value="ABC_TRANSPORTER_1"/>
    <property type="match status" value="1"/>
</dbReference>
<dbReference type="PROSITE" id="PS50893">
    <property type="entry name" value="ABC_TRANSPORTER_2"/>
    <property type="match status" value="1"/>
</dbReference>
<dbReference type="PROSITE" id="PS51264">
    <property type="entry name" value="METN"/>
    <property type="match status" value="1"/>
</dbReference>
<feature type="chain" id="PRO_0000270319" description="Methionine import ATP-binding protein MetN">
    <location>
        <begin position="1"/>
        <end position="353"/>
    </location>
</feature>
<feature type="domain" description="ABC transporter" evidence="1">
    <location>
        <begin position="7"/>
        <end position="249"/>
    </location>
</feature>
<feature type="binding site" evidence="1">
    <location>
        <begin position="41"/>
        <end position="48"/>
    </location>
    <ligand>
        <name>ATP</name>
        <dbReference type="ChEBI" id="CHEBI:30616"/>
    </ligand>
</feature>
<keyword id="KW-0029">Amino-acid transport</keyword>
<keyword id="KW-0067">ATP-binding</keyword>
<keyword id="KW-1003">Cell membrane</keyword>
<keyword id="KW-0472">Membrane</keyword>
<keyword id="KW-0547">Nucleotide-binding</keyword>
<keyword id="KW-1185">Reference proteome</keyword>
<keyword id="KW-1278">Translocase</keyword>
<keyword id="KW-0813">Transport</keyword>
<comment type="function">
    <text evidence="1">Part of the ABC transporter complex MetNIQ involved in methionine import. Responsible for energy coupling to the transport system.</text>
</comment>
<comment type="catalytic activity">
    <reaction evidence="1">
        <text>L-methionine(out) + ATP + H2O = L-methionine(in) + ADP + phosphate + H(+)</text>
        <dbReference type="Rhea" id="RHEA:29779"/>
        <dbReference type="ChEBI" id="CHEBI:15377"/>
        <dbReference type="ChEBI" id="CHEBI:15378"/>
        <dbReference type="ChEBI" id="CHEBI:30616"/>
        <dbReference type="ChEBI" id="CHEBI:43474"/>
        <dbReference type="ChEBI" id="CHEBI:57844"/>
        <dbReference type="ChEBI" id="CHEBI:456216"/>
        <dbReference type="EC" id="7.4.2.11"/>
    </reaction>
</comment>
<comment type="catalytic activity">
    <reaction evidence="1">
        <text>D-methionine(out) + ATP + H2O = D-methionine(in) + ADP + phosphate + H(+)</text>
        <dbReference type="Rhea" id="RHEA:29767"/>
        <dbReference type="ChEBI" id="CHEBI:15377"/>
        <dbReference type="ChEBI" id="CHEBI:15378"/>
        <dbReference type="ChEBI" id="CHEBI:30616"/>
        <dbReference type="ChEBI" id="CHEBI:43474"/>
        <dbReference type="ChEBI" id="CHEBI:57932"/>
        <dbReference type="ChEBI" id="CHEBI:456216"/>
        <dbReference type="EC" id="7.4.2.11"/>
    </reaction>
</comment>
<comment type="subunit">
    <text evidence="1">The complex is composed of two ATP-binding proteins (MetN), two transmembrane proteins (MetI) and a solute-binding protein (MetQ).</text>
</comment>
<comment type="subcellular location">
    <subcellularLocation>
        <location evidence="1">Cell membrane</location>
        <topology evidence="1">Peripheral membrane protein</topology>
    </subcellularLocation>
</comment>
<comment type="similarity">
    <text evidence="1">Belongs to the ABC transporter superfamily. Methionine importer (TC 3.A.1.24) family.</text>
</comment>
<accession>Q1WVG9</accession>